<organism>
    <name type="scientific">Yersinia enterocolitica</name>
    <dbReference type="NCBI Taxonomy" id="630"/>
    <lineage>
        <taxon>Bacteria</taxon>
        <taxon>Pseudomonadati</taxon>
        <taxon>Pseudomonadota</taxon>
        <taxon>Gammaproteobacteria</taxon>
        <taxon>Enterobacterales</taxon>
        <taxon>Yersiniaceae</taxon>
        <taxon>Yersinia</taxon>
    </lineage>
</organism>
<comment type="function">
    <text>Involved in the biosynthesis of lipid A, a phosphorylated glycolipid that anchors the lipopolysaccharide to the outer membrane of the cell.</text>
</comment>
<comment type="catalytic activity">
    <reaction evidence="1">
        <text>a (3R)-hydroxyacyl-[ACP] + UDP-N-acetyl-alpha-D-glucosamine = a UDP-3-O-[(3R)-3-hydroxyacyl]-N-acetyl-alpha-D-glucosamine + holo-[ACP]</text>
        <dbReference type="Rhea" id="RHEA:67812"/>
        <dbReference type="Rhea" id="RHEA-COMP:9685"/>
        <dbReference type="Rhea" id="RHEA-COMP:9945"/>
        <dbReference type="ChEBI" id="CHEBI:57705"/>
        <dbReference type="ChEBI" id="CHEBI:64479"/>
        <dbReference type="ChEBI" id="CHEBI:78827"/>
        <dbReference type="ChEBI" id="CHEBI:173225"/>
        <dbReference type="EC" id="2.3.1.129"/>
    </reaction>
</comment>
<comment type="pathway">
    <text evidence="1">Glycolipid biosynthesis; lipid IV(A) biosynthesis; lipid IV(A) from (3R)-3-hydroxytetradecanoyl-[acyl-carrier-protein] and UDP-N-acetyl-alpha-D-glucosamine: step 1/6.</text>
</comment>
<comment type="subunit">
    <text evidence="1">Homotrimer.</text>
</comment>
<comment type="subcellular location">
    <subcellularLocation>
        <location>Cytoplasm</location>
    </subcellularLocation>
</comment>
<comment type="similarity">
    <text evidence="1">Belongs to the transferase hexapeptide repeat family. LpxA subfamily.</text>
</comment>
<keyword id="KW-0012">Acyltransferase</keyword>
<keyword id="KW-0963">Cytoplasm</keyword>
<keyword id="KW-0441">Lipid A biosynthesis</keyword>
<keyword id="KW-0444">Lipid biosynthesis</keyword>
<keyword id="KW-0443">Lipid metabolism</keyword>
<keyword id="KW-0677">Repeat</keyword>
<keyword id="KW-0808">Transferase</keyword>
<evidence type="ECO:0000255" key="1">
    <source>
        <dbReference type="HAMAP-Rule" id="MF_00387"/>
    </source>
</evidence>
<name>LPXA_YEREN</name>
<accession>P32201</accession>
<feature type="chain" id="PRO_0000188080" description="Acyl-[acyl-carrier-protein]--UDP-N-acetylglucosamine O-acyltransferase">
    <location>
        <begin position="1"/>
        <end position="262"/>
    </location>
</feature>
<dbReference type="EC" id="2.3.1.129" evidence="1"/>
<dbReference type="EMBL" id="Z25463">
    <property type="protein sequence ID" value="CAA80953.1"/>
    <property type="molecule type" value="Genomic_DNA"/>
</dbReference>
<dbReference type="PIR" id="S41753">
    <property type="entry name" value="S41753"/>
</dbReference>
<dbReference type="SMR" id="P32201"/>
<dbReference type="STRING" id="1443113.LC20_01207"/>
<dbReference type="eggNOG" id="COG1043">
    <property type="taxonomic scope" value="Bacteria"/>
</dbReference>
<dbReference type="UniPathway" id="UPA00359">
    <property type="reaction ID" value="UER00477"/>
</dbReference>
<dbReference type="GO" id="GO:0005737">
    <property type="term" value="C:cytoplasm"/>
    <property type="evidence" value="ECO:0007669"/>
    <property type="project" value="UniProtKB-SubCell"/>
</dbReference>
<dbReference type="GO" id="GO:0016020">
    <property type="term" value="C:membrane"/>
    <property type="evidence" value="ECO:0007669"/>
    <property type="project" value="GOC"/>
</dbReference>
<dbReference type="GO" id="GO:0008780">
    <property type="term" value="F:acyl-[acyl-carrier-protein]-UDP-N-acetylglucosamine O-acyltransferase activity"/>
    <property type="evidence" value="ECO:0007669"/>
    <property type="project" value="UniProtKB-UniRule"/>
</dbReference>
<dbReference type="GO" id="GO:0009245">
    <property type="term" value="P:lipid A biosynthetic process"/>
    <property type="evidence" value="ECO:0007669"/>
    <property type="project" value="UniProtKB-UniRule"/>
</dbReference>
<dbReference type="CDD" id="cd03351">
    <property type="entry name" value="LbH_UDP-GlcNAc_AT"/>
    <property type="match status" value="1"/>
</dbReference>
<dbReference type="FunFam" id="1.20.1180.10:FF:000001">
    <property type="entry name" value="Acyl-[acyl-carrier-protein]--UDP-N-acetylglucosamine O-acyltransferase"/>
    <property type="match status" value="1"/>
</dbReference>
<dbReference type="FunFam" id="2.160.10.10:FF:000003">
    <property type="entry name" value="Acyl-[acyl-carrier-protein]--UDP-N-acetylglucosamine O-acyltransferase"/>
    <property type="match status" value="1"/>
</dbReference>
<dbReference type="Gene3D" id="2.160.10.10">
    <property type="entry name" value="Hexapeptide repeat proteins"/>
    <property type="match status" value="1"/>
</dbReference>
<dbReference type="Gene3D" id="1.20.1180.10">
    <property type="entry name" value="Udp N-acetylglucosamine O-acyltransferase, C-terminal domain"/>
    <property type="match status" value="1"/>
</dbReference>
<dbReference type="HAMAP" id="MF_00387">
    <property type="entry name" value="LpxA"/>
    <property type="match status" value="1"/>
</dbReference>
<dbReference type="InterPro" id="IPR029098">
    <property type="entry name" value="Acetyltransf_C"/>
</dbReference>
<dbReference type="InterPro" id="IPR037157">
    <property type="entry name" value="Acetyltransf_C_sf"/>
</dbReference>
<dbReference type="InterPro" id="IPR001451">
    <property type="entry name" value="Hexapep"/>
</dbReference>
<dbReference type="InterPro" id="IPR018357">
    <property type="entry name" value="Hexapep_transf_CS"/>
</dbReference>
<dbReference type="InterPro" id="IPR010137">
    <property type="entry name" value="Lipid_A_LpxA"/>
</dbReference>
<dbReference type="InterPro" id="IPR011004">
    <property type="entry name" value="Trimer_LpxA-like_sf"/>
</dbReference>
<dbReference type="NCBIfam" id="TIGR01852">
    <property type="entry name" value="lipid_A_lpxA"/>
    <property type="match status" value="1"/>
</dbReference>
<dbReference type="NCBIfam" id="NF003657">
    <property type="entry name" value="PRK05289.1"/>
    <property type="match status" value="1"/>
</dbReference>
<dbReference type="PANTHER" id="PTHR43480">
    <property type="entry name" value="ACYL-[ACYL-CARRIER-PROTEIN]--UDP-N-ACETYLGLUCOSAMINE O-ACYLTRANSFERASE"/>
    <property type="match status" value="1"/>
</dbReference>
<dbReference type="PANTHER" id="PTHR43480:SF1">
    <property type="entry name" value="ACYL-[ACYL-CARRIER-PROTEIN]--UDP-N-ACETYLGLUCOSAMINE O-ACYLTRANSFERASE, MITOCHONDRIAL-RELATED"/>
    <property type="match status" value="1"/>
</dbReference>
<dbReference type="Pfam" id="PF13720">
    <property type="entry name" value="Acetyltransf_11"/>
    <property type="match status" value="1"/>
</dbReference>
<dbReference type="Pfam" id="PF00132">
    <property type="entry name" value="Hexapep"/>
    <property type="match status" value="2"/>
</dbReference>
<dbReference type="PIRSF" id="PIRSF000456">
    <property type="entry name" value="UDP-GlcNAc_acltr"/>
    <property type="match status" value="1"/>
</dbReference>
<dbReference type="SUPFAM" id="SSF51161">
    <property type="entry name" value="Trimeric LpxA-like enzymes"/>
    <property type="match status" value="1"/>
</dbReference>
<dbReference type="PROSITE" id="PS00101">
    <property type="entry name" value="HEXAPEP_TRANSFERASES"/>
    <property type="match status" value="2"/>
</dbReference>
<proteinExistence type="inferred from homology"/>
<reference key="1">
    <citation type="journal article" date="1994" name="FEBS Lett.">
        <title>The novel hexapeptide motif found in the acyltransferases LpxA and LpxD of lipid A biosynthesis is conserved in various bacteria.</title>
        <authorList>
            <person name="Vuorio R."/>
            <person name="Haerkonen T."/>
            <person name="Tolvanen M."/>
            <person name="Vaara M."/>
        </authorList>
    </citation>
    <scope>NUCLEOTIDE SEQUENCE [GENOMIC DNA]</scope>
    <source>
        <strain>EH902</strain>
    </source>
</reference>
<gene>
    <name evidence="1" type="primary">lpxA</name>
</gene>
<protein>
    <recommendedName>
        <fullName evidence="1">Acyl-[acyl-carrier-protein]--UDP-N-acetylglucosamine O-acyltransferase</fullName>
        <shortName evidence="1">UDP-N-acetylglucosamine acyltransferase</shortName>
        <ecNumber evidence="1">2.3.1.129</ecNumber>
    </recommendedName>
</protein>
<sequence length="262" mass="27986">MIDKTAVIHPSSIVEEGAVIGAGVHIGPFCFVGSQVEIGAGTELKSHVVVNGITKIGCDNQIYQFASIGEANQDLKYAGEPTRVEIGDRNRIRESVSIHRGTVQGGGLSKVGSDNLLMINAHIAHDCIIGDRCILANNATLGGHVEIDDFAIIGGMTAIHQFCVIGAHVMVGGCSGVAQDVPPFVIAQGNHATPFGINIEGLKRRGFDKESLHAIRNAYKLLYRSGRTLDEVKPEIAELADQHPAVQAFIDFFARSTRGIIR</sequence>